<feature type="chain" id="PRO_1000019355" description="Ferrochelatase">
    <location>
        <begin position="1"/>
        <end position="371"/>
    </location>
</feature>
<feature type="binding site" evidence="1">
    <location>
        <position position="218"/>
    </location>
    <ligand>
        <name>Fe cation</name>
        <dbReference type="ChEBI" id="CHEBI:24875"/>
    </ligand>
</feature>
<feature type="binding site" evidence="1">
    <location>
        <position position="299"/>
    </location>
    <ligand>
        <name>Fe cation</name>
        <dbReference type="ChEBI" id="CHEBI:24875"/>
    </ligand>
</feature>
<keyword id="KW-0963">Cytoplasm</keyword>
<keyword id="KW-0350">Heme biosynthesis</keyword>
<keyword id="KW-0408">Iron</keyword>
<keyword id="KW-0456">Lyase</keyword>
<keyword id="KW-0479">Metal-binding</keyword>
<keyword id="KW-0627">Porphyrin biosynthesis</keyword>
<keyword id="KW-1185">Reference proteome</keyword>
<organism>
    <name type="scientific">Cupriavidus necator (strain ATCC 17699 / DSM 428 / KCTC 22496 / NCIMB 10442 / H16 / Stanier 337)</name>
    <name type="common">Ralstonia eutropha</name>
    <dbReference type="NCBI Taxonomy" id="381666"/>
    <lineage>
        <taxon>Bacteria</taxon>
        <taxon>Pseudomonadati</taxon>
        <taxon>Pseudomonadota</taxon>
        <taxon>Betaproteobacteria</taxon>
        <taxon>Burkholderiales</taxon>
        <taxon>Burkholderiaceae</taxon>
        <taxon>Cupriavidus</taxon>
    </lineage>
</organism>
<dbReference type="EC" id="4.98.1.1" evidence="1"/>
<dbReference type="EMBL" id="AM260479">
    <property type="protein sequence ID" value="CAJ92275.1"/>
    <property type="molecule type" value="Genomic_DNA"/>
</dbReference>
<dbReference type="RefSeq" id="WP_010809050.1">
    <property type="nucleotide sequence ID" value="NZ_CP039287.1"/>
</dbReference>
<dbReference type="SMR" id="Q0KCJ6"/>
<dbReference type="STRING" id="381666.H16_A1134"/>
<dbReference type="KEGG" id="reh:H16_A1134"/>
<dbReference type="eggNOG" id="COG0276">
    <property type="taxonomic scope" value="Bacteria"/>
</dbReference>
<dbReference type="HOGENOM" id="CLU_018884_0_0_4"/>
<dbReference type="OrthoDB" id="9809741at2"/>
<dbReference type="UniPathway" id="UPA00252">
    <property type="reaction ID" value="UER00325"/>
</dbReference>
<dbReference type="Proteomes" id="UP000008210">
    <property type="component" value="Chromosome 1"/>
</dbReference>
<dbReference type="GO" id="GO:0005737">
    <property type="term" value="C:cytoplasm"/>
    <property type="evidence" value="ECO:0007669"/>
    <property type="project" value="UniProtKB-SubCell"/>
</dbReference>
<dbReference type="GO" id="GO:0004325">
    <property type="term" value="F:ferrochelatase activity"/>
    <property type="evidence" value="ECO:0007669"/>
    <property type="project" value="UniProtKB-UniRule"/>
</dbReference>
<dbReference type="GO" id="GO:0046872">
    <property type="term" value="F:metal ion binding"/>
    <property type="evidence" value="ECO:0007669"/>
    <property type="project" value="UniProtKB-KW"/>
</dbReference>
<dbReference type="GO" id="GO:0006783">
    <property type="term" value="P:heme biosynthetic process"/>
    <property type="evidence" value="ECO:0007669"/>
    <property type="project" value="UniProtKB-UniRule"/>
</dbReference>
<dbReference type="CDD" id="cd00419">
    <property type="entry name" value="Ferrochelatase_C"/>
    <property type="match status" value="1"/>
</dbReference>
<dbReference type="CDD" id="cd03411">
    <property type="entry name" value="Ferrochelatase_N"/>
    <property type="match status" value="1"/>
</dbReference>
<dbReference type="FunFam" id="3.40.50.1400:FF:000002">
    <property type="entry name" value="Ferrochelatase"/>
    <property type="match status" value="1"/>
</dbReference>
<dbReference type="Gene3D" id="3.40.50.1400">
    <property type="match status" value="2"/>
</dbReference>
<dbReference type="HAMAP" id="MF_00323">
    <property type="entry name" value="Ferrochelatase"/>
    <property type="match status" value="1"/>
</dbReference>
<dbReference type="InterPro" id="IPR001015">
    <property type="entry name" value="Ferrochelatase"/>
</dbReference>
<dbReference type="InterPro" id="IPR019772">
    <property type="entry name" value="Ferrochelatase_AS"/>
</dbReference>
<dbReference type="InterPro" id="IPR033644">
    <property type="entry name" value="Ferrochelatase_C"/>
</dbReference>
<dbReference type="InterPro" id="IPR033659">
    <property type="entry name" value="Ferrochelatase_N"/>
</dbReference>
<dbReference type="NCBIfam" id="TIGR00109">
    <property type="entry name" value="hemH"/>
    <property type="match status" value="1"/>
</dbReference>
<dbReference type="PANTHER" id="PTHR11108">
    <property type="entry name" value="FERROCHELATASE"/>
    <property type="match status" value="1"/>
</dbReference>
<dbReference type="PANTHER" id="PTHR11108:SF1">
    <property type="entry name" value="FERROCHELATASE, MITOCHONDRIAL"/>
    <property type="match status" value="1"/>
</dbReference>
<dbReference type="Pfam" id="PF00762">
    <property type="entry name" value="Ferrochelatase"/>
    <property type="match status" value="1"/>
</dbReference>
<dbReference type="SUPFAM" id="SSF53800">
    <property type="entry name" value="Chelatase"/>
    <property type="match status" value="1"/>
</dbReference>
<dbReference type="PROSITE" id="PS00534">
    <property type="entry name" value="FERROCHELATASE"/>
    <property type="match status" value="1"/>
</dbReference>
<comment type="function">
    <text evidence="1">Catalyzes the ferrous insertion into protoporphyrin IX.</text>
</comment>
<comment type="catalytic activity">
    <reaction evidence="1">
        <text>heme b + 2 H(+) = protoporphyrin IX + Fe(2+)</text>
        <dbReference type="Rhea" id="RHEA:22584"/>
        <dbReference type="ChEBI" id="CHEBI:15378"/>
        <dbReference type="ChEBI" id="CHEBI:29033"/>
        <dbReference type="ChEBI" id="CHEBI:57306"/>
        <dbReference type="ChEBI" id="CHEBI:60344"/>
        <dbReference type="EC" id="4.98.1.1"/>
    </reaction>
</comment>
<comment type="pathway">
    <text evidence="1">Porphyrin-containing compound metabolism; protoheme biosynthesis; protoheme from protoporphyrin-IX: step 1/1.</text>
</comment>
<comment type="subcellular location">
    <subcellularLocation>
        <location evidence="1">Cytoplasm</location>
    </subcellularLocation>
</comment>
<comment type="similarity">
    <text evidence="1">Belongs to the ferrochelatase family.</text>
</comment>
<protein>
    <recommendedName>
        <fullName evidence="1">Ferrochelatase</fullName>
        <ecNumber evidence="1">4.98.1.1</ecNumber>
    </recommendedName>
    <alternativeName>
        <fullName evidence="1">Heme synthase</fullName>
    </alternativeName>
    <alternativeName>
        <fullName evidence="1">Protoheme ferro-lyase</fullName>
    </alternativeName>
</protein>
<evidence type="ECO:0000255" key="1">
    <source>
        <dbReference type="HAMAP-Rule" id="MF_00323"/>
    </source>
</evidence>
<reference key="1">
    <citation type="journal article" date="2006" name="Nat. Biotechnol.">
        <title>Genome sequence of the bioplastic-producing 'Knallgas' bacterium Ralstonia eutropha H16.</title>
        <authorList>
            <person name="Pohlmann A."/>
            <person name="Fricke W.F."/>
            <person name="Reinecke F."/>
            <person name="Kusian B."/>
            <person name="Liesegang H."/>
            <person name="Cramm R."/>
            <person name="Eitinger T."/>
            <person name="Ewering C."/>
            <person name="Poetter M."/>
            <person name="Schwartz E."/>
            <person name="Strittmatter A."/>
            <person name="Voss I."/>
            <person name="Gottschalk G."/>
            <person name="Steinbuechel A."/>
            <person name="Friedrich B."/>
            <person name="Bowien B."/>
        </authorList>
    </citation>
    <scope>NUCLEOTIDE SEQUENCE [LARGE SCALE GENOMIC DNA]</scope>
    <source>
        <strain>ATCC 17699 / DSM 428 / KCTC 22496 / NCIMB 10442 / H16 / Stanier 337</strain>
    </source>
</reference>
<accession>Q0KCJ6</accession>
<name>HEMH_CUPNH</name>
<proteinExistence type="inferred from homology"/>
<sequence>MTFSPEPAYQHGHAPRTAILLVNLGTPDAPTPKAVGRYLKEFLSDPRVVEIPRAAWLPLLHGVILPLRSRASALKYESIWLREAHMTGSPLLVYSERQAHALQRLMNQHGHEVTVACAMRYGNPSIASVLEALRRQGCEQVLVLPMYPQYSGTTTATAFDEVFRVLGQWRNQPELRLVKHFHDHPAYISALHQQVGAYWARHGMPDFARGDKLILSFHGVPRRTLELGDPYHCECLKTGRLLGEALGLQPGQYQVTFQSRFGKAEWLQPYTAPTLAELGKVGAGRVDVFCPGFPADCIETLEEIAMEGQTEFKVAGGKDFHFIPCLNDADPWVAAMAEIALQHLQGWPLATPHPHELEARRTRAQTRGAAA</sequence>
<gene>
    <name evidence="1" type="primary">hemH</name>
    <name type="ordered locus">H16_A1134</name>
</gene>